<gene>
    <name evidence="1" type="primary">rpsH</name>
    <name type="ordered locus">stu1920</name>
</gene>
<accession>Q5M2C7</accession>
<reference key="1">
    <citation type="journal article" date="2004" name="Nat. Biotechnol.">
        <title>Complete sequence and comparative genome analysis of the dairy bacterium Streptococcus thermophilus.</title>
        <authorList>
            <person name="Bolotin A."/>
            <person name="Quinquis B."/>
            <person name="Renault P."/>
            <person name="Sorokin A."/>
            <person name="Ehrlich S.D."/>
            <person name="Kulakauskas S."/>
            <person name="Lapidus A."/>
            <person name="Goltsman E."/>
            <person name="Mazur M."/>
            <person name="Pusch G.D."/>
            <person name="Fonstein M."/>
            <person name="Overbeek R."/>
            <person name="Kyprides N."/>
            <person name="Purnelle B."/>
            <person name="Prozzi D."/>
            <person name="Ngui K."/>
            <person name="Masuy D."/>
            <person name="Hancy F."/>
            <person name="Burteau S."/>
            <person name="Boutry M."/>
            <person name="Delcour J."/>
            <person name="Goffeau A."/>
            <person name="Hols P."/>
        </authorList>
    </citation>
    <scope>NUCLEOTIDE SEQUENCE [LARGE SCALE GENOMIC DNA]</scope>
    <source>
        <strain>ATCC BAA-250 / LMG 18311</strain>
    </source>
</reference>
<dbReference type="EMBL" id="CP000023">
    <property type="protein sequence ID" value="AAV61518.1"/>
    <property type="molecule type" value="Genomic_DNA"/>
</dbReference>
<dbReference type="RefSeq" id="WP_002952146.1">
    <property type="nucleotide sequence ID" value="NC_006448.1"/>
</dbReference>
<dbReference type="SMR" id="Q5M2C7"/>
<dbReference type="STRING" id="264199.stu1920"/>
<dbReference type="GeneID" id="66899648"/>
<dbReference type="KEGG" id="stl:stu1920"/>
<dbReference type="eggNOG" id="COG0096">
    <property type="taxonomic scope" value="Bacteria"/>
</dbReference>
<dbReference type="HOGENOM" id="CLU_098428_0_2_9"/>
<dbReference type="Proteomes" id="UP000001170">
    <property type="component" value="Chromosome"/>
</dbReference>
<dbReference type="GO" id="GO:1990904">
    <property type="term" value="C:ribonucleoprotein complex"/>
    <property type="evidence" value="ECO:0007669"/>
    <property type="project" value="UniProtKB-KW"/>
</dbReference>
<dbReference type="GO" id="GO:0005840">
    <property type="term" value="C:ribosome"/>
    <property type="evidence" value="ECO:0007669"/>
    <property type="project" value="UniProtKB-KW"/>
</dbReference>
<dbReference type="GO" id="GO:0019843">
    <property type="term" value="F:rRNA binding"/>
    <property type="evidence" value="ECO:0007669"/>
    <property type="project" value="UniProtKB-UniRule"/>
</dbReference>
<dbReference type="GO" id="GO:0003735">
    <property type="term" value="F:structural constituent of ribosome"/>
    <property type="evidence" value="ECO:0007669"/>
    <property type="project" value="InterPro"/>
</dbReference>
<dbReference type="GO" id="GO:0006412">
    <property type="term" value="P:translation"/>
    <property type="evidence" value="ECO:0007669"/>
    <property type="project" value="UniProtKB-UniRule"/>
</dbReference>
<dbReference type="FunFam" id="3.30.1370.30:FF:000002">
    <property type="entry name" value="30S ribosomal protein S8"/>
    <property type="match status" value="1"/>
</dbReference>
<dbReference type="FunFam" id="3.30.1490.10:FF:000001">
    <property type="entry name" value="30S ribosomal protein S8"/>
    <property type="match status" value="1"/>
</dbReference>
<dbReference type="Gene3D" id="3.30.1370.30">
    <property type="match status" value="1"/>
</dbReference>
<dbReference type="Gene3D" id="3.30.1490.10">
    <property type="match status" value="1"/>
</dbReference>
<dbReference type="HAMAP" id="MF_01302_B">
    <property type="entry name" value="Ribosomal_uS8_B"/>
    <property type="match status" value="1"/>
</dbReference>
<dbReference type="InterPro" id="IPR000630">
    <property type="entry name" value="Ribosomal_uS8"/>
</dbReference>
<dbReference type="InterPro" id="IPR047863">
    <property type="entry name" value="Ribosomal_uS8_CS"/>
</dbReference>
<dbReference type="InterPro" id="IPR035987">
    <property type="entry name" value="Ribosomal_uS8_sf"/>
</dbReference>
<dbReference type="NCBIfam" id="NF001109">
    <property type="entry name" value="PRK00136.1"/>
    <property type="match status" value="1"/>
</dbReference>
<dbReference type="PANTHER" id="PTHR11758">
    <property type="entry name" value="40S RIBOSOMAL PROTEIN S15A"/>
    <property type="match status" value="1"/>
</dbReference>
<dbReference type="Pfam" id="PF00410">
    <property type="entry name" value="Ribosomal_S8"/>
    <property type="match status" value="1"/>
</dbReference>
<dbReference type="SUPFAM" id="SSF56047">
    <property type="entry name" value="Ribosomal protein S8"/>
    <property type="match status" value="1"/>
</dbReference>
<dbReference type="PROSITE" id="PS00053">
    <property type="entry name" value="RIBOSOMAL_S8"/>
    <property type="match status" value="1"/>
</dbReference>
<keyword id="KW-1185">Reference proteome</keyword>
<keyword id="KW-0687">Ribonucleoprotein</keyword>
<keyword id="KW-0689">Ribosomal protein</keyword>
<keyword id="KW-0694">RNA-binding</keyword>
<keyword id="KW-0699">rRNA-binding</keyword>
<evidence type="ECO:0000255" key="1">
    <source>
        <dbReference type="HAMAP-Rule" id="MF_01302"/>
    </source>
</evidence>
<evidence type="ECO:0000305" key="2"/>
<organism>
    <name type="scientific">Streptococcus thermophilus (strain ATCC BAA-250 / LMG 18311)</name>
    <dbReference type="NCBI Taxonomy" id="264199"/>
    <lineage>
        <taxon>Bacteria</taxon>
        <taxon>Bacillati</taxon>
        <taxon>Bacillota</taxon>
        <taxon>Bacilli</taxon>
        <taxon>Lactobacillales</taxon>
        <taxon>Streptococcaceae</taxon>
        <taxon>Streptococcus</taxon>
    </lineage>
</organism>
<sequence>MVMTDPIADFLTRIRNANQAKHEVLEVPASNIKKGIAEILKREGFVKNVEVIEDDKQGIIRVFLKYGQNGERVITNLKRISKPGLRVYSKREDIPKVLNGLGIAIISTSEGLLTDKEARQKNVGGEVIAYVW</sequence>
<name>RS8_STRT2</name>
<proteinExistence type="inferred from homology"/>
<comment type="function">
    <text evidence="1">One of the primary rRNA binding proteins, it binds directly to 16S rRNA central domain where it helps coordinate assembly of the platform of the 30S subunit.</text>
</comment>
<comment type="subunit">
    <text evidence="1">Part of the 30S ribosomal subunit. Contacts proteins S5 and S12.</text>
</comment>
<comment type="similarity">
    <text evidence="1">Belongs to the universal ribosomal protein uS8 family.</text>
</comment>
<protein>
    <recommendedName>
        <fullName evidence="1">Small ribosomal subunit protein uS8</fullName>
    </recommendedName>
    <alternativeName>
        <fullName evidence="2">30S ribosomal protein S8</fullName>
    </alternativeName>
</protein>
<feature type="chain" id="PRO_0000126503" description="Small ribosomal subunit protein uS8">
    <location>
        <begin position="1"/>
        <end position="132"/>
    </location>
</feature>